<feature type="chain" id="PRO_0000406889" description="Uricase">
    <location>
        <begin position="1"/>
        <end position="302"/>
    </location>
</feature>
<feature type="active site" description="Charge relay system" evidence="4">
    <location>
        <position position="22"/>
    </location>
</feature>
<feature type="active site" description="Charge relay system" evidence="4">
    <location>
        <position position="67"/>
    </location>
</feature>
<feature type="active site" description="Charge relay system" evidence="4">
    <location>
        <position position="251"/>
    </location>
</feature>
<feature type="binding site" evidence="4 5 6">
    <location>
        <position position="67"/>
    </location>
    <ligand>
        <name>urate</name>
        <dbReference type="ChEBI" id="CHEBI:17775"/>
    </ligand>
</feature>
<feature type="binding site" evidence="4 5 6">
    <location>
        <position position="68"/>
    </location>
    <ligand>
        <name>urate</name>
        <dbReference type="ChEBI" id="CHEBI:17775"/>
    </ligand>
</feature>
<feature type="binding site" evidence="4 5 6">
    <location>
        <position position="163"/>
    </location>
    <ligand>
        <name>urate</name>
        <dbReference type="ChEBI" id="CHEBI:17775"/>
    </ligand>
</feature>
<feature type="binding site" evidence="4 5 6">
    <location>
        <position position="180"/>
    </location>
    <ligand>
        <name>urate</name>
        <dbReference type="ChEBI" id="CHEBI:17775"/>
    </ligand>
</feature>
<feature type="binding site" evidence="4 5 6">
    <location>
        <position position="223"/>
    </location>
    <ligand>
        <name>urate</name>
        <dbReference type="ChEBI" id="CHEBI:17775"/>
    </ligand>
</feature>
<feature type="binding site" evidence="1">
    <location>
        <position position="249"/>
    </location>
    <ligand>
        <name>urate</name>
        <dbReference type="ChEBI" id="CHEBI:17775"/>
    </ligand>
</feature>
<feature type="strand" evidence="8">
    <location>
        <begin position="13"/>
        <end position="31"/>
    </location>
</feature>
<feature type="strand" evidence="8">
    <location>
        <begin position="33"/>
        <end position="36"/>
    </location>
</feature>
<feature type="strand" evidence="8">
    <location>
        <begin position="38"/>
        <end position="50"/>
    </location>
</feature>
<feature type="helix" evidence="8">
    <location>
        <begin position="53"/>
        <end position="57"/>
    </location>
</feature>
<feature type="helix" evidence="8">
    <location>
        <begin position="67"/>
        <end position="78"/>
    </location>
</feature>
<feature type="helix" evidence="8">
    <location>
        <begin position="85"/>
        <end position="99"/>
    </location>
</feature>
<feature type="strand" evidence="8">
    <location>
        <begin position="103"/>
        <end position="118"/>
    </location>
</feature>
<feature type="strand" evidence="8">
    <location>
        <begin position="122"/>
        <end position="140"/>
    </location>
</feature>
<feature type="strand" evidence="8">
    <location>
        <begin position="143"/>
        <end position="161"/>
    </location>
</feature>
<feature type="strand" evidence="7">
    <location>
        <begin position="176"/>
        <end position="178"/>
    </location>
</feature>
<feature type="strand" evidence="8">
    <location>
        <begin position="182"/>
        <end position="193"/>
    </location>
</feature>
<feature type="helix" evidence="8">
    <location>
        <begin position="199"/>
        <end position="216"/>
    </location>
</feature>
<feature type="helix" evidence="8">
    <location>
        <begin position="222"/>
        <end position="236"/>
    </location>
</feature>
<feature type="strand" evidence="8">
    <location>
        <begin position="240"/>
        <end position="249"/>
    </location>
</feature>
<feature type="strand" evidence="8">
    <location>
        <begin position="252"/>
        <end position="254"/>
    </location>
</feature>
<feature type="helix" evidence="8">
    <location>
        <begin position="258"/>
        <end position="260"/>
    </location>
</feature>
<feature type="strand" evidence="8">
    <location>
        <begin position="268"/>
        <end position="271"/>
    </location>
</feature>
<feature type="strand" evidence="8">
    <location>
        <begin position="274"/>
        <end position="285"/>
    </location>
</feature>
<feature type="helix" evidence="8">
    <location>
        <begin position="293"/>
        <end position="295"/>
    </location>
</feature>
<gene>
    <name type="primary">uox</name>
</gene>
<keyword id="KW-0002">3D-structure</keyword>
<keyword id="KW-0560">Oxidoreductase</keyword>
<keyword id="KW-0659">Purine metabolism</keyword>
<comment type="function">
    <text evidence="3">Catalyzes the oxidation of uric acid to 5-hydroxyisourate, which is further processed to form (S)-allantoin.</text>
</comment>
<comment type="catalytic activity">
    <reaction evidence="3">
        <text>urate + O2 + H2O = 5-hydroxyisourate + H2O2</text>
        <dbReference type="Rhea" id="RHEA:21368"/>
        <dbReference type="ChEBI" id="CHEBI:15377"/>
        <dbReference type="ChEBI" id="CHEBI:15379"/>
        <dbReference type="ChEBI" id="CHEBI:16240"/>
        <dbReference type="ChEBI" id="CHEBI:17775"/>
        <dbReference type="ChEBI" id="CHEBI:18072"/>
        <dbReference type="EC" id="1.7.3.3"/>
    </reaction>
</comment>
<comment type="pathway">
    <text evidence="3">Purine metabolism; urate degradation; (S)-allantoin from urate: step 1/3.</text>
</comment>
<comment type="subunit">
    <text evidence="2">Homotetramer.</text>
</comment>
<comment type="similarity">
    <text evidence="3">Belongs to the uricase family.</text>
</comment>
<organism>
    <name type="scientific">Arthrobacter globiformis</name>
    <dbReference type="NCBI Taxonomy" id="1665"/>
    <lineage>
        <taxon>Bacteria</taxon>
        <taxon>Bacillati</taxon>
        <taxon>Actinomycetota</taxon>
        <taxon>Actinomycetes</taxon>
        <taxon>Micrococcales</taxon>
        <taxon>Micrococcaceae</taxon>
        <taxon>Arthrobacter</taxon>
    </lineage>
</organism>
<sequence>MTATAETSTGTKVVLGQNQYGKAEVRLVKVTRNTARHEIQDLNVTSQLRGDFEAAHTAGDNAHVVATDTQKNTVYAFARDGFATTEEFLLRLGKHFTEGFDWVTGGRWAAQQFFWDRINDHDHAFSRNKSEVRTAVLEISGSEQAIVAGIEGLTVLKSTGSEFHGFPRDKYTTLQETTDRILATDVSARWRYNTVEVDFDAVYASVRGLLLKAFAETHSLALQQTMYEMGRAVIETHPEIDEIKMSLPNKHHFLVDLQPFGQDNPNEVFYAADRPYGLIEATIQREGSRADHPIWSNIAGFC</sequence>
<proteinExistence type="evidence at protein level"/>
<evidence type="ECO:0000250" key="1">
    <source>
        <dbReference type="UniProtKB" id="Q00511"/>
    </source>
</evidence>
<evidence type="ECO:0000269" key="2">
    <source>
    </source>
</evidence>
<evidence type="ECO:0000305" key="3"/>
<evidence type="ECO:0000305" key="4">
    <source>
    </source>
</evidence>
<evidence type="ECO:0007744" key="5">
    <source>
        <dbReference type="PDB" id="2YZB"/>
    </source>
</evidence>
<evidence type="ECO:0007744" key="6">
    <source>
        <dbReference type="PDB" id="2YZC"/>
    </source>
</evidence>
<evidence type="ECO:0007829" key="7">
    <source>
        <dbReference type="PDB" id="2YZB"/>
    </source>
</evidence>
<evidence type="ECO:0007829" key="8">
    <source>
        <dbReference type="PDB" id="2YZC"/>
    </source>
</evidence>
<reference key="1">
    <citation type="journal article" date="2008" name="Acta Crystallogr. D">
        <title>Structures of Arthrobacter globiformis urate oxidase-ligand complexes.</title>
        <authorList>
            <person name="Juan E.C."/>
            <person name="Hoque M.M."/>
            <person name="Shimizu S."/>
            <person name="Hossain M.T."/>
            <person name="Yamamoto T."/>
            <person name="Imamura S."/>
            <person name="Suzuki K."/>
            <person name="Tsunoda M."/>
            <person name="Amano H."/>
            <person name="Sekiguchi T."/>
            <person name="Takenaka A."/>
        </authorList>
    </citation>
    <scope>X-RAY CRYSTALLOGRAPHY (1.90 ANGSTROMS) OF APOPROTEIN AND IN COMPLEXES WITH URATE; ALLANTOIN AND INHIBITOR 8-AZAXANTHIN</scope>
    <scope>SUBUNIT</scope>
    <scope>PROBABLE ACTIVE SITE</scope>
</reference>
<name>URIC_ARTGO</name>
<dbReference type="EC" id="1.7.3.3" evidence="3"/>
<dbReference type="PDB" id="2YZB">
    <property type="method" value="X-ray"/>
    <property type="resolution" value="1.90 A"/>
    <property type="chains" value="A/B/C/D/E/F/G/H=1-302"/>
</dbReference>
<dbReference type="PDB" id="2YZC">
    <property type="method" value="X-ray"/>
    <property type="resolution" value="1.88 A"/>
    <property type="chains" value="A/B/C/D/E/F/G/H=1-302"/>
</dbReference>
<dbReference type="PDB" id="2YZD">
    <property type="method" value="X-ray"/>
    <property type="resolution" value="2.24 A"/>
    <property type="chains" value="A/B/C/D/E/F/G/H=1-302"/>
</dbReference>
<dbReference type="PDB" id="2YZE">
    <property type="method" value="X-ray"/>
    <property type="resolution" value="1.99 A"/>
    <property type="chains" value="A/B/C/D/E/F/G/H=1-302"/>
</dbReference>
<dbReference type="PDB" id="6OE8">
    <property type="method" value="X-ray"/>
    <property type="resolution" value="1.99 A"/>
    <property type="chains" value="A/B/C/D=2-302"/>
</dbReference>
<dbReference type="PDBsum" id="2YZB"/>
<dbReference type="PDBsum" id="2YZC"/>
<dbReference type="PDBsum" id="2YZD"/>
<dbReference type="PDBsum" id="2YZE"/>
<dbReference type="PDBsum" id="6OE8"/>
<dbReference type="SMR" id="D0VWQ1"/>
<dbReference type="BRENDA" id="1.7.3.3">
    <property type="organism ID" value="444"/>
</dbReference>
<dbReference type="SABIO-RK" id="D0VWQ1"/>
<dbReference type="UniPathway" id="UPA00394">
    <property type="reaction ID" value="UER00650"/>
</dbReference>
<dbReference type="EvolutionaryTrace" id="D0VWQ1"/>
<dbReference type="GO" id="GO:0004846">
    <property type="term" value="F:urate oxidase activity"/>
    <property type="evidence" value="ECO:0007669"/>
    <property type="project" value="UniProtKB-EC"/>
</dbReference>
<dbReference type="GO" id="GO:0006144">
    <property type="term" value="P:purine nucleobase metabolic process"/>
    <property type="evidence" value="ECO:0007669"/>
    <property type="project" value="UniProtKB-KW"/>
</dbReference>
<dbReference type="GO" id="GO:0019628">
    <property type="term" value="P:urate catabolic process"/>
    <property type="evidence" value="ECO:0007669"/>
    <property type="project" value="UniProtKB-UniPathway"/>
</dbReference>
<dbReference type="Gene3D" id="3.10.270.10">
    <property type="entry name" value="Urate Oxidase"/>
    <property type="match status" value="1"/>
</dbReference>
<dbReference type="InterPro" id="IPR002042">
    <property type="entry name" value="Uricase"/>
</dbReference>
<dbReference type="InterPro" id="IPR019842">
    <property type="entry name" value="Uricase_CS"/>
</dbReference>
<dbReference type="NCBIfam" id="TIGR03383">
    <property type="entry name" value="urate_oxi"/>
    <property type="match status" value="1"/>
</dbReference>
<dbReference type="PANTHER" id="PTHR42874">
    <property type="entry name" value="URICASE"/>
    <property type="match status" value="1"/>
</dbReference>
<dbReference type="PANTHER" id="PTHR42874:SF1">
    <property type="entry name" value="URICASE"/>
    <property type="match status" value="1"/>
</dbReference>
<dbReference type="Pfam" id="PF01014">
    <property type="entry name" value="Uricase"/>
    <property type="match status" value="2"/>
</dbReference>
<dbReference type="PIRSF" id="PIRSF000241">
    <property type="entry name" value="Urate_oxidase"/>
    <property type="match status" value="1"/>
</dbReference>
<dbReference type="PRINTS" id="PR00093">
    <property type="entry name" value="URICASE"/>
</dbReference>
<dbReference type="SUPFAM" id="SSF55620">
    <property type="entry name" value="Tetrahydrobiopterin biosynthesis enzymes-like"/>
    <property type="match status" value="2"/>
</dbReference>
<dbReference type="PROSITE" id="PS00366">
    <property type="entry name" value="URICASE"/>
    <property type="match status" value="1"/>
</dbReference>
<protein>
    <recommendedName>
        <fullName>Uricase</fullName>
        <ecNumber evidence="3">1.7.3.3</ecNumber>
    </recommendedName>
    <alternativeName>
        <fullName>Urate oxidase</fullName>
        <shortName>AgUOX</shortName>
    </alternativeName>
</protein>
<accession>D0VWQ1</accession>